<sequence length="381" mass="41965">MIISSASDYREAARRRVPPFMFHYADGGSYAEQTLARNVSDLENIALRQRVLKDMSELDTSIELFGEKLSMPTILAPVGACGMYARRGEVQAAQAADNKGVPFTLSTVSICPIEEVAPAIKRPMWFQLYVLKDRGFMKNALERAKAAGCSTLVFTVDMPTPGARYRDMHSGMSGPYKEIRRVLQGFTHPFWAYDVGIKGKPHTLGNVSTYMGRQIGLDDYIGWLTENFDPSISWKDLEWIREFWEGPMVIKGILDPEDAKDAVRFGADGIVVSNHGGRQLDGVLSSARALPPIADAVKGDIKIIADSGIRNGLDIVRMLALGADATMLGRAFVYALGAEGRQGVENMLDIFKKEMHVAMTLTSNRTIADIKPEALVDLSKL</sequence>
<gene>
    <name evidence="1" type="primary">lldD</name>
    <name type="ordered locus">HI_1739.1</name>
</gene>
<protein>
    <recommendedName>
        <fullName evidence="1">L-lactate dehydrogenase</fullName>
        <ecNumber evidence="1">1.1.-.-</ecNumber>
    </recommendedName>
</protein>
<comment type="function">
    <text evidence="1">Catalyzes the conversion of L-lactate to pyruvate. Is coupled to the respiratory chain.</text>
</comment>
<comment type="catalytic activity">
    <reaction evidence="1">
        <text>(S)-lactate + A = pyruvate + AH2</text>
        <dbReference type="Rhea" id="RHEA:45816"/>
        <dbReference type="ChEBI" id="CHEBI:13193"/>
        <dbReference type="ChEBI" id="CHEBI:15361"/>
        <dbReference type="ChEBI" id="CHEBI:16651"/>
        <dbReference type="ChEBI" id="CHEBI:17499"/>
    </reaction>
</comment>
<comment type="cofactor">
    <cofactor evidence="1">
        <name>FMN</name>
        <dbReference type="ChEBI" id="CHEBI:58210"/>
    </cofactor>
</comment>
<comment type="subcellular location">
    <subcellularLocation>
        <location evidence="1">Cell inner membrane</location>
        <topology evidence="1">Peripheral membrane protein</topology>
    </subcellularLocation>
</comment>
<comment type="similarity">
    <text evidence="1">Belongs to the FMN-dependent alpha-hydroxy acid dehydrogenase family.</text>
</comment>
<keyword id="KW-0997">Cell inner membrane</keyword>
<keyword id="KW-1003">Cell membrane</keyword>
<keyword id="KW-0285">Flavoprotein</keyword>
<keyword id="KW-0288">FMN</keyword>
<keyword id="KW-0472">Membrane</keyword>
<keyword id="KW-0560">Oxidoreductase</keyword>
<keyword id="KW-1185">Reference proteome</keyword>
<accession>P46454</accession>
<evidence type="ECO:0000255" key="1">
    <source>
        <dbReference type="HAMAP-Rule" id="MF_01559"/>
    </source>
</evidence>
<proteinExistence type="inferred from homology"/>
<feature type="chain" id="PRO_0000206339" description="L-lactate dehydrogenase">
    <location>
        <begin position="1"/>
        <end position="381"/>
    </location>
</feature>
<feature type="domain" description="FMN hydroxy acid dehydrogenase" evidence="1">
    <location>
        <begin position="1"/>
        <end position="380"/>
    </location>
</feature>
<feature type="active site" description="Proton acceptor" evidence="1">
    <location>
        <position position="275"/>
    </location>
</feature>
<feature type="binding site" evidence="1">
    <location>
        <position position="24"/>
    </location>
    <ligand>
        <name>substrate</name>
    </ligand>
</feature>
<feature type="binding site" evidence="1">
    <location>
        <position position="106"/>
    </location>
    <ligand>
        <name>FMN</name>
        <dbReference type="ChEBI" id="CHEBI:58210"/>
    </ligand>
</feature>
<feature type="binding site" evidence="1">
    <location>
        <position position="127"/>
    </location>
    <ligand>
        <name>FMN</name>
        <dbReference type="ChEBI" id="CHEBI:58210"/>
    </ligand>
</feature>
<feature type="binding site" evidence="1">
    <location>
        <position position="129"/>
    </location>
    <ligand>
        <name>substrate</name>
    </ligand>
</feature>
<feature type="binding site" evidence="1">
    <location>
        <position position="155"/>
    </location>
    <ligand>
        <name>FMN</name>
        <dbReference type="ChEBI" id="CHEBI:58210"/>
    </ligand>
</feature>
<feature type="binding site" evidence="1">
    <location>
        <position position="164"/>
    </location>
    <ligand>
        <name>substrate</name>
    </ligand>
</feature>
<feature type="binding site" evidence="1">
    <location>
        <position position="251"/>
    </location>
    <ligand>
        <name>FMN</name>
        <dbReference type="ChEBI" id="CHEBI:58210"/>
    </ligand>
</feature>
<feature type="binding site" evidence="1">
    <location>
        <position position="278"/>
    </location>
    <ligand>
        <name>substrate</name>
    </ligand>
</feature>
<feature type="binding site" evidence="1">
    <location>
        <begin position="306"/>
        <end position="330"/>
    </location>
    <ligand>
        <name>FMN</name>
        <dbReference type="ChEBI" id="CHEBI:58210"/>
    </ligand>
</feature>
<name>LLDD_HAEIN</name>
<organism>
    <name type="scientific">Haemophilus influenzae (strain ATCC 51907 / DSM 11121 / KW20 / Rd)</name>
    <dbReference type="NCBI Taxonomy" id="71421"/>
    <lineage>
        <taxon>Bacteria</taxon>
        <taxon>Pseudomonadati</taxon>
        <taxon>Pseudomonadota</taxon>
        <taxon>Gammaproteobacteria</taxon>
        <taxon>Pasteurellales</taxon>
        <taxon>Pasteurellaceae</taxon>
        <taxon>Haemophilus</taxon>
    </lineage>
</organism>
<reference key="1">
    <citation type="journal article" date="1995" name="Science">
        <title>Whole-genome random sequencing and assembly of Haemophilus influenzae Rd.</title>
        <authorList>
            <person name="Fleischmann R.D."/>
            <person name="Adams M.D."/>
            <person name="White O."/>
            <person name="Clayton R.A."/>
            <person name="Kirkness E.F."/>
            <person name="Kerlavage A.R."/>
            <person name="Bult C.J."/>
            <person name="Tomb J.-F."/>
            <person name="Dougherty B.A."/>
            <person name="Merrick J.M."/>
            <person name="McKenney K."/>
            <person name="Sutton G.G."/>
            <person name="FitzHugh W."/>
            <person name="Fields C.A."/>
            <person name="Gocayne J.D."/>
            <person name="Scott J.D."/>
            <person name="Shirley R."/>
            <person name="Liu L.-I."/>
            <person name="Glodek A."/>
            <person name="Kelley J.M."/>
            <person name="Weidman J.F."/>
            <person name="Phillips C.A."/>
            <person name="Spriggs T."/>
            <person name="Hedblom E."/>
            <person name="Cotton M.D."/>
            <person name="Utterback T.R."/>
            <person name="Hanna M.C."/>
            <person name="Nguyen D.T."/>
            <person name="Saudek D.M."/>
            <person name="Brandon R.C."/>
            <person name="Fine L.D."/>
            <person name="Fritchman J.L."/>
            <person name="Fuhrmann J.L."/>
            <person name="Geoghagen N.S.M."/>
            <person name="Gnehm C.L."/>
            <person name="McDonald L.A."/>
            <person name="Small K.V."/>
            <person name="Fraser C.M."/>
            <person name="Smith H.O."/>
            <person name="Venter J.C."/>
        </authorList>
    </citation>
    <scope>NUCLEOTIDE SEQUENCE [LARGE SCALE GENOMIC DNA]</scope>
    <source>
        <strain>ATCC 51907 / DSM 11121 / KW20 / Rd</strain>
    </source>
</reference>
<reference key="2">
    <citation type="submission" date="1995-09" db="UniProtKB">
        <authorList>
            <person name="Koonin E.V."/>
            <person name="Rudd K.E."/>
        </authorList>
    </citation>
    <scope>IDENTIFICATION</scope>
</reference>
<dbReference type="EC" id="1.1.-.-" evidence="1"/>
<dbReference type="EMBL" id="L42023">
    <property type="protein sequence ID" value="AAC23385.1"/>
    <property type="molecule type" value="Genomic_DNA"/>
</dbReference>
<dbReference type="PIR" id="T09429">
    <property type="entry name" value="T09429"/>
</dbReference>
<dbReference type="RefSeq" id="NP_439882.1">
    <property type="nucleotide sequence ID" value="NC_000907.1"/>
</dbReference>
<dbReference type="SMR" id="P46454"/>
<dbReference type="STRING" id="71421.HI_1739.1"/>
<dbReference type="EnsemblBacteria" id="AAC23385">
    <property type="protein sequence ID" value="AAC23385"/>
    <property type="gene ID" value="HI_1739.1"/>
</dbReference>
<dbReference type="KEGG" id="hin:HI_1739.1"/>
<dbReference type="PATRIC" id="fig|71421.8.peg.1821"/>
<dbReference type="eggNOG" id="COG1304">
    <property type="taxonomic scope" value="Bacteria"/>
</dbReference>
<dbReference type="HOGENOM" id="CLU_020639_0_0_6"/>
<dbReference type="OrthoDB" id="9770452at2"/>
<dbReference type="PhylomeDB" id="P46454"/>
<dbReference type="BioCyc" id="HINF71421:G1GJ1-1761-MONOMER"/>
<dbReference type="Proteomes" id="UP000000579">
    <property type="component" value="Chromosome"/>
</dbReference>
<dbReference type="GO" id="GO:0005886">
    <property type="term" value="C:plasma membrane"/>
    <property type="evidence" value="ECO:0000318"/>
    <property type="project" value="GO_Central"/>
</dbReference>
<dbReference type="GO" id="GO:0010181">
    <property type="term" value="F:FMN binding"/>
    <property type="evidence" value="ECO:0007669"/>
    <property type="project" value="InterPro"/>
</dbReference>
<dbReference type="GO" id="GO:0004459">
    <property type="term" value="F:L-lactate dehydrogenase activity"/>
    <property type="evidence" value="ECO:0000318"/>
    <property type="project" value="GO_Central"/>
</dbReference>
<dbReference type="GO" id="GO:0009060">
    <property type="term" value="P:aerobic respiration"/>
    <property type="evidence" value="ECO:0000318"/>
    <property type="project" value="GO_Central"/>
</dbReference>
<dbReference type="GO" id="GO:0006089">
    <property type="term" value="P:lactate metabolic process"/>
    <property type="evidence" value="ECO:0007669"/>
    <property type="project" value="UniProtKB-UniRule"/>
</dbReference>
<dbReference type="CDD" id="cd02809">
    <property type="entry name" value="alpha_hydroxyacid_oxid_FMN"/>
    <property type="match status" value="1"/>
</dbReference>
<dbReference type="FunFam" id="3.20.20.70:FF:000029">
    <property type="entry name" value="L-lactate dehydrogenase"/>
    <property type="match status" value="1"/>
</dbReference>
<dbReference type="Gene3D" id="3.20.20.70">
    <property type="entry name" value="Aldolase class I"/>
    <property type="match status" value="1"/>
</dbReference>
<dbReference type="HAMAP" id="MF_01559">
    <property type="entry name" value="L_lact_dehydr"/>
    <property type="match status" value="1"/>
</dbReference>
<dbReference type="InterPro" id="IPR013785">
    <property type="entry name" value="Aldolase_TIM"/>
</dbReference>
<dbReference type="InterPro" id="IPR012133">
    <property type="entry name" value="Alpha-hydoxy_acid_DH_FMN"/>
</dbReference>
<dbReference type="InterPro" id="IPR000262">
    <property type="entry name" value="FMN-dep_DH"/>
</dbReference>
<dbReference type="InterPro" id="IPR037396">
    <property type="entry name" value="FMN_HAD"/>
</dbReference>
<dbReference type="InterPro" id="IPR008259">
    <property type="entry name" value="FMN_hydac_DH_AS"/>
</dbReference>
<dbReference type="InterPro" id="IPR020920">
    <property type="entry name" value="LldD"/>
</dbReference>
<dbReference type="NCBIfam" id="NF033901">
    <property type="entry name" value="L_lactate_LldD"/>
    <property type="match status" value="1"/>
</dbReference>
<dbReference type="NCBIfam" id="NF008398">
    <property type="entry name" value="PRK11197.1"/>
    <property type="match status" value="1"/>
</dbReference>
<dbReference type="PANTHER" id="PTHR10578:SF85">
    <property type="entry name" value="L-LACTATE DEHYDROGENASE"/>
    <property type="match status" value="1"/>
</dbReference>
<dbReference type="PANTHER" id="PTHR10578">
    <property type="entry name" value="S -2-HYDROXY-ACID OXIDASE-RELATED"/>
    <property type="match status" value="1"/>
</dbReference>
<dbReference type="Pfam" id="PF01070">
    <property type="entry name" value="FMN_dh"/>
    <property type="match status" value="1"/>
</dbReference>
<dbReference type="PIRSF" id="PIRSF000138">
    <property type="entry name" value="Al-hdrx_acd_dh"/>
    <property type="match status" value="1"/>
</dbReference>
<dbReference type="SUPFAM" id="SSF51395">
    <property type="entry name" value="FMN-linked oxidoreductases"/>
    <property type="match status" value="1"/>
</dbReference>
<dbReference type="PROSITE" id="PS00557">
    <property type="entry name" value="FMN_HYDROXY_ACID_DH_1"/>
    <property type="match status" value="1"/>
</dbReference>
<dbReference type="PROSITE" id="PS51349">
    <property type="entry name" value="FMN_HYDROXY_ACID_DH_2"/>
    <property type="match status" value="1"/>
</dbReference>